<evidence type="ECO:0000255" key="1">
    <source>
        <dbReference type="PROSITE-ProRule" id="PRU00227"/>
    </source>
</evidence>
<evidence type="ECO:0000269" key="2">
    <source>
    </source>
</evidence>
<evidence type="ECO:0000269" key="3">
    <source>
    </source>
</evidence>
<evidence type="ECO:0000269" key="4">
    <source>
    </source>
</evidence>
<evidence type="ECO:0000303" key="5">
    <source>
    </source>
</evidence>
<evidence type="ECO:0000305" key="6"/>
<evidence type="ECO:0000305" key="7">
    <source>
    </source>
</evidence>
<protein>
    <recommendedName>
        <fullName evidence="5">Respiratory transcription factor ZNF1</fullName>
    </recommendedName>
    <alternativeName>
        <fullName evidence="5">Zinc finger protein 1</fullName>
    </alternativeName>
</protein>
<organism>
    <name type="scientific">Saccharomyces cerevisiae (strain ATCC 204508 / S288c)</name>
    <name type="common">Baker's yeast</name>
    <dbReference type="NCBI Taxonomy" id="559292"/>
    <lineage>
        <taxon>Eukaryota</taxon>
        <taxon>Fungi</taxon>
        <taxon>Dikarya</taxon>
        <taxon>Ascomycota</taxon>
        <taxon>Saccharomycotina</taxon>
        <taxon>Saccharomycetes</taxon>
        <taxon>Saccharomycetales</taxon>
        <taxon>Saccharomycetaceae</taxon>
        <taxon>Saccharomyces</taxon>
    </lineage>
</organism>
<dbReference type="EMBL" id="D50617">
    <property type="protein sequence ID" value="BAA09189.1"/>
    <property type="molecule type" value="Genomic_DNA"/>
</dbReference>
<dbReference type="EMBL" id="BK006940">
    <property type="protein sequence ID" value="DAA12388.1"/>
    <property type="molecule type" value="Genomic_DNA"/>
</dbReference>
<dbReference type="PIR" id="S56203">
    <property type="entry name" value="S56203"/>
</dbReference>
<dbReference type="RefSeq" id="NP_116603.1">
    <property type="nucleotide sequence ID" value="NM_001179915.1"/>
</dbReference>
<dbReference type="BioGRID" id="31095">
    <property type="interactions" value="139"/>
</dbReference>
<dbReference type="DIP" id="DIP-5438N"/>
<dbReference type="FunCoup" id="P43551">
    <property type="interactions" value="148"/>
</dbReference>
<dbReference type="IntAct" id="P43551">
    <property type="interactions" value="3"/>
</dbReference>
<dbReference type="STRING" id="4932.YFL052W"/>
<dbReference type="iPTMnet" id="P43551"/>
<dbReference type="PaxDb" id="4932-YFL052W"/>
<dbReference type="PeptideAtlas" id="P43551"/>
<dbReference type="EnsemblFungi" id="YFL052W_mRNA">
    <property type="protein sequence ID" value="YFL052W"/>
    <property type="gene ID" value="YFL052W"/>
</dbReference>
<dbReference type="GeneID" id="850492"/>
<dbReference type="KEGG" id="sce:YFL052W"/>
<dbReference type="AGR" id="SGD:S000001842"/>
<dbReference type="SGD" id="S000001842">
    <property type="gene designation" value="ZNF1"/>
</dbReference>
<dbReference type="VEuPathDB" id="FungiDB:YFL052W"/>
<dbReference type="eggNOG" id="ENOG502S2FW">
    <property type="taxonomic scope" value="Eukaryota"/>
</dbReference>
<dbReference type="GeneTree" id="ENSGT00940000176316"/>
<dbReference type="HOGENOM" id="CLU_046324_0_0_1"/>
<dbReference type="InParanoid" id="P43551"/>
<dbReference type="OMA" id="AESEAWN"/>
<dbReference type="OrthoDB" id="2740448at2759"/>
<dbReference type="BioCyc" id="YEAST:G3O-30413-MONOMER"/>
<dbReference type="BioGRID-ORCS" id="850492">
    <property type="hits" value="0 hits in 10 CRISPR screens"/>
</dbReference>
<dbReference type="PRO" id="PR:P43551"/>
<dbReference type="Proteomes" id="UP000002311">
    <property type="component" value="Chromosome VI"/>
</dbReference>
<dbReference type="RNAct" id="P43551">
    <property type="molecule type" value="protein"/>
</dbReference>
<dbReference type="GO" id="GO:0005634">
    <property type="term" value="C:nucleus"/>
    <property type="evidence" value="ECO:0000305"/>
    <property type="project" value="SGD"/>
</dbReference>
<dbReference type="GO" id="GO:0001228">
    <property type="term" value="F:DNA-binding transcription activator activity, RNA polymerase II-specific"/>
    <property type="evidence" value="ECO:0000315"/>
    <property type="project" value="SGD"/>
</dbReference>
<dbReference type="GO" id="GO:0000977">
    <property type="term" value="F:RNA polymerase II transcription regulatory region sequence-specific DNA binding"/>
    <property type="evidence" value="ECO:0000314"/>
    <property type="project" value="SGD"/>
</dbReference>
<dbReference type="GO" id="GO:0008270">
    <property type="term" value="F:zinc ion binding"/>
    <property type="evidence" value="ECO:0007669"/>
    <property type="project" value="InterPro"/>
</dbReference>
<dbReference type="GO" id="GO:0071361">
    <property type="term" value="P:cellular response to ethanol"/>
    <property type="evidence" value="ECO:0000315"/>
    <property type="project" value="SGD"/>
</dbReference>
<dbReference type="GO" id="GO:0045944">
    <property type="term" value="P:positive regulation of transcription by RNA polymerase II"/>
    <property type="evidence" value="ECO:0000315"/>
    <property type="project" value="SGD"/>
</dbReference>
<dbReference type="CDD" id="cd12148">
    <property type="entry name" value="fungal_TF_MHR"/>
    <property type="match status" value="1"/>
</dbReference>
<dbReference type="CDD" id="cd00067">
    <property type="entry name" value="GAL4"/>
    <property type="match status" value="1"/>
</dbReference>
<dbReference type="Gene3D" id="4.10.240.10">
    <property type="entry name" value="Zn(2)-C6 fungal-type DNA-binding domain"/>
    <property type="match status" value="1"/>
</dbReference>
<dbReference type="InterPro" id="IPR050797">
    <property type="entry name" value="Carb_Metab_Trans_Reg"/>
</dbReference>
<dbReference type="InterPro" id="IPR020448">
    <property type="entry name" value="Maltose_ferment_reg_DNA-bd"/>
</dbReference>
<dbReference type="InterPro" id="IPR036864">
    <property type="entry name" value="Zn2-C6_fun-type_DNA-bd_sf"/>
</dbReference>
<dbReference type="InterPro" id="IPR001138">
    <property type="entry name" value="Zn2Cys6_DnaBD"/>
</dbReference>
<dbReference type="PANTHER" id="PTHR31668">
    <property type="entry name" value="GLUCOSE TRANSPORT TRANSCRIPTION REGULATOR RGT1-RELATED-RELATED"/>
    <property type="match status" value="1"/>
</dbReference>
<dbReference type="PANTHER" id="PTHR31668:SF18">
    <property type="entry name" value="MALTOSE FERMENTATION REGULATORY PROTEIN MAL13-RELATED"/>
    <property type="match status" value="1"/>
</dbReference>
<dbReference type="Pfam" id="PF00172">
    <property type="entry name" value="Zn_clus"/>
    <property type="match status" value="1"/>
</dbReference>
<dbReference type="PRINTS" id="PR00054">
    <property type="entry name" value="FUNGALZNCYS"/>
</dbReference>
<dbReference type="SMART" id="SM00066">
    <property type="entry name" value="GAL4"/>
    <property type="match status" value="1"/>
</dbReference>
<dbReference type="SUPFAM" id="SSF57701">
    <property type="entry name" value="Zn2/Cys6 DNA-binding domain"/>
    <property type="match status" value="1"/>
</dbReference>
<dbReference type="PROSITE" id="PS00463">
    <property type="entry name" value="ZN2_CY6_FUNGAL_1"/>
    <property type="match status" value="1"/>
</dbReference>
<dbReference type="PROSITE" id="PS50048">
    <property type="entry name" value="ZN2_CY6_FUNGAL_2"/>
    <property type="match status" value="1"/>
</dbReference>
<reference key="1">
    <citation type="journal article" date="1995" name="Nat. Genet.">
        <title>Analysis of the nucleotide sequence of chromosome VI from Saccharomyces cerevisiae.</title>
        <authorList>
            <person name="Murakami Y."/>
            <person name="Naitou M."/>
            <person name="Hagiwara H."/>
            <person name="Shibata T."/>
            <person name="Ozawa M."/>
            <person name="Sasanuma S."/>
            <person name="Sasanuma M."/>
            <person name="Tsuchiya Y."/>
            <person name="Soeda E."/>
            <person name="Yokoyama K."/>
            <person name="Yamazaki M."/>
            <person name="Tashiro H."/>
            <person name="Eki T."/>
        </authorList>
    </citation>
    <scope>NUCLEOTIDE SEQUENCE [LARGE SCALE GENOMIC DNA]</scope>
    <source>
        <strain>ATCC 204508 / S288c</strain>
    </source>
</reference>
<reference key="2">
    <citation type="journal article" date="2014" name="G3 (Bethesda)">
        <title>The reference genome sequence of Saccharomyces cerevisiae: Then and now.</title>
        <authorList>
            <person name="Engel S.R."/>
            <person name="Dietrich F.S."/>
            <person name="Fisk D.G."/>
            <person name="Binkley G."/>
            <person name="Balakrishnan R."/>
            <person name="Costanzo M.C."/>
            <person name="Dwight S.S."/>
            <person name="Hitz B.C."/>
            <person name="Karra K."/>
            <person name="Nash R.S."/>
            <person name="Weng S."/>
            <person name="Wong E.D."/>
            <person name="Lloyd P."/>
            <person name="Skrzypek M.S."/>
            <person name="Miyasato S.R."/>
            <person name="Simison M."/>
            <person name="Cherry J.M."/>
        </authorList>
    </citation>
    <scope>GENOME REANNOTATION</scope>
    <source>
        <strain>ATCC 204508 / S288c</strain>
    </source>
</reference>
<reference key="3">
    <citation type="journal article" date="2001" name="Nucleic Acids Res.">
        <title>Phenotypic analysis of genes encoding yeast zinc cluster proteins.</title>
        <authorList>
            <person name="Akache B."/>
            <person name="Wu K."/>
            <person name="Turcotte B."/>
        </authorList>
    </citation>
    <scope>DISRUPTION PHENOTYPE</scope>
    <scope>FUNCTION</scope>
</reference>
<reference key="4">
    <citation type="journal article" date="2010" name="Cell Res.">
        <title>Identifying cooperative transcription factors by combining ChIP-chip data and knockout data.</title>
        <authorList>
            <person name="Yang Y."/>
            <person name="Zhang Z."/>
            <person name="Li Y."/>
            <person name="Zhu X.G."/>
            <person name="Liu Q."/>
        </authorList>
    </citation>
    <scope>FUNCTION</scope>
</reference>
<reference key="5">
    <citation type="journal article" date="2015" name="FEMS Yeast Res.">
        <title>Zinc cluster protein Znf1, a novel transcription factor of non-fermentative metabolism in Saccharomyces cerevisiae.</title>
        <authorList>
            <person name="Tangsombatvichit P."/>
            <person name="Semkiv M.V."/>
            <person name="Sibirny A.A."/>
            <person name="Jensen L.T."/>
            <person name="Ratanakhanokchai K."/>
            <person name="Soontorngun N."/>
        </authorList>
    </citation>
    <scope>INDUCTION</scope>
    <scope>DISRUPTION PHENOTYPE</scope>
    <scope>FUNCTION</scope>
    <scope>DNA-BINDING</scope>
</reference>
<accession>P43551</accession>
<accession>D6VTH8</accession>
<comment type="function">
    <text evidence="2 3 4">Transcription factor that regulates respiratory growth and plays a critical role in stress adaptation during non-fermentative growth (PubMed:11353088, PubMed:20975739, PubMed:25673751). Binds to promoters of genes involved in non-fermentative metabolism, including processes such as gluconeogenesis (PCK1, FBP1 and MDH2), glyoxylate shunt (MLS1 and ICL1) and the tricarboxylic acid cycle (ACO1) (PubMed:25673751). Plays a role in maintaining mitochondrial morphology and function (PubMed:25673751). Also plays a role in tolerance to pH and osmotic stress, especially during the oxidative metabolism (PubMed:25673751).</text>
</comment>
<comment type="subcellular location">
    <subcellularLocation>
        <location evidence="7">Nucleus</location>
    </subcellularLocation>
</comment>
<comment type="induction">
    <text evidence="4">Expression is increased about 5-fold by ethanol.</text>
</comment>
<comment type="disruption phenotype">
    <text evidence="2 4">Impairs growth on non-fermentable carbon sources (PubMed:11353088). Results in sensitivity to a combination of low osmolarity and high temperature (PubMed:11353088). Also results in the reduced expression of genes involved in non-fermentable carbon source utilization including MLS1, FBP1, ACO1, PCK1, ICL1, MDH2, SFC1, ADY2, GDH2, FUM1, CIT1 and CIT2, when cells were shifted from glucose to ethanol (PubMed:25673751). Leads to reduced PCK1 and FBP1 enzymatic activities (PubMed:25673751). Leads to defective mitochondrial morphology with unclear structures of the inner membrane cristae when grown in ethanol (PubMed:25673751).</text>
</comment>
<comment type="similarity">
    <text evidence="6">Belongs to the MAL13 family.</text>
</comment>
<sequence>MARNRQACDCCCIRRVKCDRKKPCKCCLQHNLQCTYLRPLKKRGPKPVKVRNLKKVDDVQVFSKSSSGGIMKVPKALIDQCLRLYNDKLYVIWPLLCYDDLYELLEKRYDETCVYWFLVSLSAATLSDLQTEIESEGGVTFTGIQLSSFCMSSRQEFDDFNGSDIFKIMTYYCLNRCYAQMSNSRTSYRLSCEAVGLIKLAGFHREETLKLLPFDEQQLGRKVYYLLLLTERYFSVYTHCATSLDTTIAPPQPENVTDPRLSLDSFLEMIRVFTVPGKCFFDALATDSANVTCTEDSLKKIWRELHTVPLEIEPWSYGYVDISFSRHWIRTLAWKLVLQISGMRISFLSNSKNTHIPVEIARDMLEDTFLIPKNLYAVHGPGISVKALEIADALVDVVNQYDQNAESEAWNFLFDISKFVFSLKHCDSTLVDKFTTKCQCALITLPLSNPLESTDGSKEDVDALP</sequence>
<proteinExistence type="evidence at protein level"/>
<name>ZNF1_YEAST</name>
<feature type="chain" id="PRO_0000114996" description="Respiratory transcription factor ZNF1">
    <location>
        <begin position="1"/>
        <end position="465"/>
    </location>
</feature>
<feature type="DNA-binding region" description="Zn(2)-C6 fungal-type" evidence="1">
    <location>
        <begin position="8"/>
        <end position="34"/>
    </location>
</feature>
<keyword id="KW-0238">DNA-binding</keyword>
<keyword id="KW-0479">Metal-binding</keyword>
<keyword id="KW-0539">Nucleus</keyword>
<keyword id="KW-1185">Reference proteome</keyword>
<keyword id="KW-0804">Transcription</keyword>
<keyword id="KW-0805">Transcription regulation</keyword>
<keyword id="KW-0862">Zinc</keyword>
<gene>
    <name evidence="5" type="primary">ZNF1</name>
    <name type="ordered locus">YFL052W</name>
</gene>